<keyword id="KW-0963">Cytoplasm</keyword>
<keyword id="KW-1015">Disulfide bond</keyword>
<keyword id="KW-0438">Lignin biosynthesis</keyword>
<keyword id="KW-0521">NADP</keyword>
<keyword id="KW-0560">Oxidoreductase</keyword>
<keyword id="KW-0611">Plant defense</keyword>
<keyword id="KW-1185">Reference proteome</keyword>
<evidence type="ECO:0000250" key="1">
    <source>
        <dbReference type="UniProtKB" id="A0A059TC02"/>
    </source>
</evidence>
<evidence type="ECO:0000250" key="2">
    <source>
        <dbReference type="UniProtKB" id="P51110"/>
    </source>
</evidence>
<evidence type="ECO:0000250" key="3">
    <source>
        <dbReference type="UniProtKB" id="Q12068"/>
    </source>
</evidence>
<evidence type="ECO:0000269" key="4">
    <source>
    </source>
</evidence>
<evidence type="ECO:0000303" key="5">
    <source>
    </source>
</evidence>
<evidence type="ECO:0000305" key="6"/>
<evidence type="ECO:0000312" key="7">
    <source>
        <dbReference type="EMBL" id="BAD19133.1"/>
    </source>
</evidence>
<evidence type="ECO:0000312" key="8">
    <source>
        <dbReference type="EMBL" id="BAD19248.1"/>
    </source>
</evidence>
<evidence type="ECO:0000312" key="9">
    <source>
        <dbReference type="EMBL" id="BAF10374.1"/>
    </source>
</evidence>
<evidence type="ECO:0000312" key="10">
    <source>
        <dbReference type="EMBL" id="EAZ25022.1"/>
    </source>
</evidence>
<organism>
    <name type="scientific">Oryza sativa subsp. japonica</name>
    <name type="common">Rice</name>
    <dbReference type="NCBI Taxonomy" id="39947"/>
    <lineage>
        <taxon>Eukaryota</taxon>
        <taxon>Viridiplantae</taxon>
        <taxon>Streptophyta</taxon>
        <taxon>Embryophyta</taxon>
        <taxon>Tracheophyta</taxon>
        <taxon>Spermatophyta</taxon>
        <taxon>Magnoliopsida</taxon>
        <taxon>Liliopsida</taxon>
        <taxon>Poales</taxon>
        <taxon>Poaceae</taxon>
        <taxon>BOP clade</taxon>
        <taxon>Oryzoideae</taxon>
        <taxon>Oryzeae</taxon>
        <taxon>Oryzinae</taxon>
        <taxon>Oryza</taxon>
        <taxon>Oryza sativa</taxon>
    </lineage>
</organism>
<protein>
    <recommendedName>
        <fullName evidence="6">Cinnamoyl-CoA reductase 1</fullName>
        <shortName evidence="5">OsCCR1</shortName>
        <ecNumber evidence="4">1.2.1.44</ecNumber>
    </recommendedName>
</protein>
<dbReference type="EC" id="1.2.1.44" evidence="4"/>
<dbReference type="EMBL" id="AP003996">
    <property type="protein sequence ID" value="BAD19133.1"/>
    <property type="molecule type" value="Genomic_DNA"/>
</dbReference>
<dbReference type="EMBL" id="AP004064">
    <property type="protein sequence ID" value="BAD19248.1"/>
    <property type="molecule type" value="Genomic_DNA"/>
</dbReference>
<dbReference type="EMBL" id="AP008208">
    <property type="protein sequence ID" value="BAF10374.1"/>
    <property type="molecule type" value="Genomic_DNA"/>
</dbReference>
<dbReference type="EMBL" id="AP014958">
    <property type="protein sequence ID" value="BAS81500.1"/>
    <property type="molecule type" value="Genomic_DNA"/>
</dbReference>
<dbReference type="EMBL" id="CM000139">
    <property type="protein sequence ID" value="EAZ25022.1"/>
    <property type="molecule type" value="Genomic_DNA"/>
</dbReference>
<dbReference type="EMBL" id="AK064401">
    <property type="protein sequence ID" value="BAG89093.1"/>
    <property type="molecule type" value="mRNA"/>
</dbReference>
<dbReference type="RefSeq" id="XP_015622902.1">
    <property type="nucleotide sequence ID" value="XM_015767416.1"/>
</dbReference>
<dbReference type="SMR" id="Q6K9A2"/>
<dbReference type="DIP" id="DIP-61087N"/>
<dbReference type="FunCoup" id="Q6K9A2">
    <property type="interactions" value="221"/>
</dbReference>
<dbReference type="IntAct" id="Q6K9A2">
    <property type="interactions" value="1"/>
</dbReference>
<dbReference type="STRING" id="39947.Q6K9A2"/>
<dbReference type="PaxDb" id="39947-Q6K9A2"/>
<dbReference type="EnsemblPlants" id="Os02t0808800-01">
    <property type="protein sequence ID" value="Os02t0808800-01"/>
    <property type="gene ID" value="Os02g0808800"/>
</dbReference>
<dbReference type="Gramene" id="Os02t0808800-01">
    <property type="protein sequence ID" value="Os02t0808800-01"/>
    <property type="gene ID" value="Os02g0808800"/>
</dbReference>
<dbReference type="KEGG" id="dosa:Os02g0808800"/>
<dbReference type="eggNOG" id="KOG1502">
    <property type="taxonomic scope" value="Eukaryota"/>
</dbReference>
<dbReference type="HOGENOM" id="CLU_007383_9_0_1"/>
<dbReference type="InParanoid" id="Q6K9A2"/>
<dbReference type="OMA" id="TGTKPTY"/>
<dbReference type="OrthoDB" id="2735536at2759"/>
<dbReference type="UniPathway" id="UPA00711"/>
<dbReference type="Proteomes" id="UP000000763">
    <property type="component" value="Chromosome 2"/>
</dbReference>
<dbReference type="Proteomes" id="UP000007752">
    <property type="component" value="Chromosome 2"/>
</dbReference>
<dbReference type="Proteomes" id="UP000059680">
    <property type="component" value="Chromosome 2"/>
</dbReference>
<dbReference type="GO" id="GO:0005737">
    <property type="term" value="C:cytoplasm"/>
    <property type="evidence" value="ECO:0000314"/>
    <property type="project" value="UniProtKB"/>
</dbReference>
<dbReference type="GO" id="GO:0016621">
    <property type="term" value="F:cinnamoyl-CoA reductase activity"/>
    <property type="evidence" value="ECO:0000314"/>
    <property type="project" value="UniProtKB"/>
</dbReference>
<dbReference type="GO" id="GO:0016616">
    <property type="term" value="F:oxidoreductase activity, acting on the CH-OH group of donors, NAD or NADP as acceptor"/>
    <property type="evidence" value="ECO:0000318"/>
    <property type="project" value="GO_Central"/>
</dbReference>
<dbReference type="GO" id="GO:0006952">
    <property type="term" value="P:defense response"/>
    <property type="evidence" value="ECO:0007669"/>
    <property type="project" value="UniProtKB-KW"/>
</dbReference>
<dbReference type="GO" id="GO:0009809">
    <property type="term" value="P:lignin biosynthetic process"/>
    <property type="evidence" value="ECO:0000314"/>
    <property type="project" value="UniProtKB"/>
</dbReference>
<dbReference type="CDD" id="cd08958">
    <property type="entry name" value="FR_SDR_e"/>
    <property type="match status" value="1"/>
</dbReference>
<dbReference type="FunFam" id="3.40.50.720:FF:000219">
    <property type="entry name" value="Cinnamoyl-CoA reductase 1"/>
    <property type="match status" value="1"/>
</dbReference>
<dbReference type="Gene3D" id="3.40.50.720">
    <property type="entry name" value="NAD(P)-binding Rossmann-like Domain"/>
    <property type="match status" value="1"/>
</dbReference>
<dbReference type="InterPro" id="IPR001509">
    <property type="entry name" value="Epimerase_deHydtase"/>
</dbReference>
<dbReference type="InterPro" id="IPR036291">
    <property type="entry name" value="NAD(P)-bd_dom_sf"/>
</dbReference>
<dbReference type="InterPro" id="IPR050425">
    <property type="entry name" value="NAD(P)_dehydrat-like"/>
</dbReference>
<dbReference type="PANTHER" id="PTHR10366:SF353">
    <property type="entry name" value="CINNAMOYL-COA REDUCTASE 1"/>
    <property type="match status" value="1"/>
</dbReference>
<dbReference type="PANTHER" id="PTHR10366">
    <property type="entry name" value="NAD DEPENDENT EPIMERASE/DEHYDRATASE"/>
    <property type="match status" value="1"/>
</dbReference>
<dbReference type="Pfam" id="PF01370">
    <property type="entry name" value="Epimerase"/>
    <property type="match status" value="1"/>
</dbReference>
<dbReference type="SUPFAM" id="SSF51735">
    <property type="entry name" value="NAD(P)-binding Rossmann-fold domains"/>
    <property type="match status" value="1"/>
</dbReference>
<accession>Q6K9A2</accession>
<proteinExistence type="evidence at protein level"/>
<reference key="1">
    <citation type="journal article" date="2005" name="Nature">
        <title>The map-based sequence of the rice genome.</title>
        <authorList>
            <consortium name="International rice genome sequencing project (IRGSP)"/>
        </authorList>
    </citation>
    <scope>NUCLEOTIDE SEQUENCE [LARGE SCALE GENOMIC DNA]</scope>
    <source>
        <strain>cv. Nipponbare</strain>
    </source>
</reference>
<reference key="2">
    <citation type="journal article" date="2008" name="Nucleic Acids Res.">
        <title>The rice annotation project database (RAP-DB): 2008 update.</title>
        <authorList>
            <consortium name="The rice annotation project (RAP)"/>
        </authorList>
    </citation>
    <scope>GENOME REANNOTATION</scope>
    <source>
        <strain>cv. Nipponbare</strain>
    </source>
</reference>
<reference key="3">
    <citation type="journal article" date="2013" name="Rice">
        <title>Improvement of the Oryza sativa Nipponbare reference genome using next generation sequence and optical map data.</title>
        <authorList>
            <person name="Kawahara Y."/>
            <person name="de la Bastide M."/>
            <person name="Hamilton J.P."/>
            <person name="Kanamori H."/>
            <person name="McCombie W.R."/>
            <person name="Ouyang S."/>
            <person name="Schwartz D.C."/>
            <person name="Tanaka T."/>
            <person name="Wu J."/>
            <person name="Zhou S."/>
            <person name="Childs K.L."/>
            <person name="Davidson R.M."/>
            <person name="Lin H."/>
            <person name="Quesada-Ocampo L."/>
            <person name="Vaillancourt B."/>
            <person name="Sakai H."/>
            <person name="Lee S.S."/>
            <person name="Kim J."/>
            <person name="Numa H."/>
            <person name="Itoh T."/>
            <person name="Buell C.R."/>
            <person name="Matsumoto T."/>
        </authorList>
    </citation>
    <scope>GENOME REANNOTATION</scope>
    <source>
        <strain>cv. Nipponbare</strain>
    </source>
</reference>
<reference key="4">
    <citation type="journal article" date="2005" name="PLoS Biol.">
        <title>The genomes of Oryza sativa: a history of duplications.</title>
        <authorList>
            <person name="Yu J."/>
            <person name="Wang J."/>
            <person name="Lin W."/>
            <person name="Li S."/>
            <person name="Li H."/>
            <person name="Zhou J."/>
            <person name="Ni P."/>
            <person name="Dong W."/>
            <person name="Hu S."/>
            <person name="Zeng C."/>
            <person name="Zhang J."/>
            <person name="Zhang Y."/>
            <person name="Li R."/>
            <person name="Xu Z."/>
            <person name="Li S."/>
            <person name="Li X."/>
            <person name="Zheng H."/>
            <person name="Cong L."/>
            <person name="Lin L."/>
            <person name="Yin J."/>
            <person name="Geng J."/>
            <person name="Li G."/>
            <person name="Shi J."/>
            <person name="Liu J."/>
            <person name="Lv H."/>
            <person name="Li J."/>
            <person name="Wang J."/>
            <person name="Deng Y."/>
            <person name="Ran L."/>
            <person name="Shi X."/>
            <person name="Wang X."/>
            <person name="Wu Q."/>
            <person name="Li C."/>
            <person name="Ren X."/>
            <person name="Wang J."/>
            <person name="Wang X."/>
            <person name="Li D."/>
            <person name="Liu D."/>
            <person name="Zhang X."/>
            <person name="Ji Z."/>
            <person name="Zhao W."/>
            <person name="Sun Y."/>
            <person name="Zhang Z."/>
            <person name="Bao J."/>
            <person name="Han Y."/>
            <person name="Dong L."/>
            <person name="Ji J."/>
            <person name="Chen P."/>
            <person name="Wu S."/>
            <person name="Liu J."/>
            <person name="Xiao Y."/>
            <person name="Bu D."/>
            <person name="Tan J."/>
            <person name="Yang L."/>
            <person name="Ye C."/>
            <person name="Zhang J."/>
            <person name="Xu J."/>
            <person name="Zhou Y."/>
            <person name="Yu Y."/>
            <person name="Zhang B."/>
            <person name="Zhuang S."/>
            <person name="Wei H."/>
            <person name="Liu B."/>
            <person name="Lei M."/>
            <person name="Yu H."/>
            <person name="Li Y."/>
            <person name="Xu H."/>
            <person name="Wei S."/>
            <person name="He X."/>
            <person name="Fang L."/>
            <person name="Zhang Z."/>
            <person name="Zhang Y."/>
            <person name="Huang X."/>
            <person name="Su Z."/>
            <person name="Tong W."/>
            <person name="Li J."/>
            <person name="Tong Z."/>
            <person name="Li S."/>
            <person name="Ye J."/>
            <person name="Wang L."/>
            <person name="Fang L."/>
            <person name="Lei T."/>
            <person name="Chen C.-S."/>
            <person name="Chen H.-C."/>
            <person name="Xu Z."/>
            <person name="Li H."/>
            <person name="Huang H."/>
            <person name="Zhang F."/>
            <person name="Xu H."/>
            <person name="Li N."/>
            <person name="Zhao C."/>
            <person name="Li S."/>
            <person name="Dong L."/>
            <person name="Huang Y."/>
            <person name="Li L."/>
            <person name="Xi Y."/>
            <person name="Qi Q."/>
            <person name="Li W."/>
            <person name="Zhang B."/>
            <person name="Hu W."/>
            <person name="Zhang Y."/>
            <person name="Tian X."/>
            <person name="Jiao Y."/>
            <person name="Liang X."/>
            <person name="Jin J."/>
            <person name="Gao L."/>
            <person name="Zheng W."/>
            <person name="Hao B."/>
            <person name="Liu S.-M."/>
            <person name="Wang W."/>
            <person name="Yuan L."/>
            <person name="Cao M."/>
            <person name="McDermott J."/>
            <person name="Samudrala R."/>
            <person name="Wang J."/>
            <person name="Wong G.K.-S."/>
            <person name="Yang H."/>
        </authorList>
    </citation>
    <scope>NUCLEOTIDE SEQUENCE [LARGE SCALE GENOMIC DNA]</scope>
    <source>
        <strain>cv. Nipponbare</strain>
    </source>
</reference>
<reference key="5">
    <citation type="journal article" date="2003" name="Science">
        <title>Collection, mapping, and annotation of over 28,000 cDNA clones from japonica rice.</title>
        <authorList>
            <consortium name="The rice full-length cDNA consortium"/>
        </authorList>
    </citation>
    <scope>NUCLEOTIDE SEQUENCE [LARGE SCALE MRNA]</scope>
    <source>
        <strain>cv. Nipponbare</strain>
    </source>
</reference>
<reference key="6">
    <citation type="journal article" date="2006" name="Proc. Natl. Acad. Sci. U.S.A.">
        <title>Cinnamoyl-CoA reductase, a key enzyme in lignin biosynthesis, is an effector of small GTPase Rac in defense signaling in rice.</title>
        <authorList>
            <person name="Kawasaki T."/>
            <person name="Koita H."/>
            <person name="Nakatsubo T."/>
            <person name="Hasegawa K."/>
            <person name="Wakabayashi K."/>
            <person name="Takahashi H."/>
            <person name="Umemura K."/>
            <person name="Umezawa T."/>
            <person name="Shimamoto K."/>
        </authorList>
    </citation>
    <scope>FUNCTION</scope>
    <scope>CATALYTIC ACTIVITY</scope>
    <scope>ACTIVITY REGULATION</scope>
    <scope>INTERACTION WITH RAC1</scope>
    <scope>SUBCELLULAR LOCATION</scope>
    <scope>INDUCTION BY SPHINGOLIPID ELICITOR</scope>
</reference>
<feature type="chain" id="PRO_0000437027" description="Cinnamoyl-CoA reductase 1">
    <location>
        <begin position="1"/>
        <end position="338"/>
    </location>
</feature>
<feature type="active site" description="Proton donor" evidence="3">
    <location>
        <position position="169"/>
    </location>
</feature>
<feature type="binding site" evidence="2">
    <location>
        <begin position="22"/>
        <end position="28"/>
    </location>
    <ligand>
        <name>NADP(+)</name>
        <dbReference type="ChEBI" id="CHEBI:58349"/>
    </ligand>
</feature>
<feature type="binding site" evidence="2">
    <location>
        <position position="47"/>
    </location>
    <ligand>
        <name>NADP(+)</name>
        <dbReference type="ChEBI" id="CHEBI:58349"/>
    </ligand>
</feature>
<feature type="binding site" evidence="1">
    <location>
        <position position="53"/>
    </location>
    <ligand>
        <name>NADP(+)</name>
        <dbReference type="ChEBI" id="CHEBI:58349"/>
    </ligand>
</feature>
<feature type="binding site" evidence="2">
    <location>
        <begin position="73"/>
        <end position="74"/>
    </location>
    <ligand>
        <name>NADP(+)</name>
        <dbReference type="ChEBI" id="CHEBI:58349"/>
    </ligand>
</feature>
<feature type="binding site" evidence="2">
    <location>
        <begin position="93"/>
        <end position="95"/>
    </location>
    <ligand>
        <name>NADP(+)</name>
        <dbReference type="ChEBI" id="CHEBI:58349"/>
    </ligand>
</feature>
<feature type="binding site" evidence="1">
    <location>
        <position position="165"/>
    </location>
    <ligand>
        <name>NADP(+)</name>
        <dbReference type="ChEBI" id="CHEBI:58349"/>
    </ligand>
</feature>
<feature type="binding site" evidence="2">
    <location>
        <position position="169"/>
    </location>
    <ligand>
        <name>NADP(+)</name>
        <dbReference type="ChEBI" id="CHEBI:58349"/>
    </ligand>
</feature>
<feature type="binding site" evidence="2">
    <location>
        <begin position="192"/>
        <end position="195"/>
    </location>
    <ligand>
        <name>NADP(+)</name>
        <dbReference type="ChEBI" id="CHEBI:58349"/>
    </ligand>
</feature>
<feature type="binding site" evidence="2">
    <location>
        <position position="207"/>
    </location>
    <ligand>
        <name>NADP(+)</name>
        <dbReference type="ChEBI" id="CHEBI:58349"/>
    </ligand>
</feature>
<feature type="disulfide bond" evidence="1">
    <location>
        <begin position="158"/>
        <end position="166"/>
    </location>
</feature>
<gene>
    <name evidence="5" type="primary">CCR1</name>
    <name evidence="9" type="ordered locus">Os02g0808800</name>
    <name evidence="6" type="ordered locus">LOC_Os02g56460</name>
    <name evidence="7" type="ORF">OJ1112_G06.14</name>
    <name evidence="8" type="ORF">OJ1520_C09.26</name>
    <name evidence="10" type="ORF">OsJ_08807</name>
</gene>
<sequence length="338" mass="37390">MSSNFEANNNNNGEKQLVCVTGAGGFIGSWVVKELLIRGYHVRGTARDPADSKNAHLLELEGADERLSLCRADVLDAASLRAAFSGCHGVFHVASPVSNDPDLVPVAVEGTRNVINAAADMGVRRVVFTSSYGAVHMNPNRSPDAVLDETCWSDYEFCKQTDNLYCCAKMMAEMTATEEAAKRGLELAVVVPSMTMGPMLQQTLNFSTNHVARYLMGTKKSYPNAVAAYVDVRDVARAHVLVYERPEARGRYLCIGTVLHRAELLRMLRELFPRYPATAKCEDDGKPMAKPYKFSNQRLKDLGLEFTPLRKSLNEAVLCMQQKGHLPLIYPVPKRAYL</sequence>
<name>CCR1_ORYSJ</name>
<comment type="function">
    <text evidence="4">Involved in the latter stages of lignin biosynthesis. Catalyzes one of the last steps of monolignol biosynthesis, the conversion of cinnamoyl-CoAs into their corresponding cinnamaldehydes. Probably involved in the formation of lignin in defense responses.</text>
</comment>
<comment type="catalytic activity">
    <reaction evidence="4">
        <text>(E)-cinnamaldehyde + NADP(+) + CoA = (E)-cinnamoyl-CoA + NADPH + H(+)</text>
        <dbReference type="Rhea" id="RHEA:10620"/>
        <dbReference type="ChEBI" id="CHEBI:15378"/>
        <dbReference type="ChEBI" id="CHEBI:16731"/>
        <dbReference type="ChEBI" id="CHEBI:57252"/>
        <dbReference type="ChEBI" id="CHEBI:57287"/>
        <dbReference type="ChEBI" id="CHEBI:57783"/>
        <dbReference type="ChEBI" id="CHEBI:58349"/>
        <dbReference type="EC" id="1.2.1.44"/>
    </reaction>
</comment>
<comment type="activity regulation">
    <text evidence="4">Activated by the small GTPase RAC1.</text>
</comment>
<comment type="pathway">
    <text evidence="6">Aromatic compound metabolism; phenylpropanoid biosynthesis.</text>
</comment>
<comment type="subunit">
    <text evidence="4">Interacts with RAC1 in a GTP-dependent manner.</text>
</comment>
<comment type="interaction">
    <interactant intactId="EBI-15561872">
        <id>Q6K9A2</id>
    </interactant>
    <interactant intactId="EBI-15561891">
        <id>Q9SSX0</id>
        <label>RAC1</label>
    </interactant>
    <organismsDiffer>false</organismsDiffer>
    <experiments>3</experiments>
</comment>
<comment type="subcellular location">
    <subcellularLocation>
        <location evidence="4">Cytoplasm</location>
    </subcellularLocation>
</comment>
<comment type="induction">
    <text evidence="4">By sphingolipid elicitor (SE).</text>
</comment>
<comment type="similarity">
    <text evidence="6">Belongs to the NAD(P)-dependent epimerase/dehydratase family. Dihydroflavonol-4-reductase subfamily.</text>
</comment>